<dbReference type="EMBL" id="AC131760">
    <property type="status" value="NOT_ANNOTATED_CDS"/>
    <property type="molecule type" value="Genomic_DNA"/>
</dbReference>
<dbReference type="EMBL" id="BC031768">
    <property type="protein sequence ID" value="AAH31768.1"/>
    <property type="molecule type" value="mRNA"/>
</dbReference>
<dbReference type="CCDS" id="CCDS24229.1">
    <molecule id="Q8K2C7-2"/>
</dbReference>
<dbReference type="CCDS" id="CCDS48713.1">
    <molecule id="Q8K2C7-1"/>
</dbReference>
<dbReference type="RefSeq" id="NP_001164497.1">
    <molecule id="Q8K2C7-1"/>
    <property type="nucleotide sequence ID" value="NM_001171026.1"/>
</dbReference>
<dbReference type="RefSeq" id="NP_808282.2">
    <molecule id="Q8K2C7-2"/>
    <property type="nucleotide sequence ID" value="NM_177614.3"/>
</dbReference>
<dbReference type="SMR" id="Q8K2C7"/>
<dbReference type="BioGRID" id="229745">
    <property type="interactions" value="15"/>
</dbReference>
<dbReference type="FunCoup" id="Q8K2C7">
    <property type="interactions" value="1295"/>
</dbReference>
<dbReference type="STRING" id="10090.ENSMUSP00000128914"/>
<dbReference type="GlyConnect" id="2640">
    <property type="glycosylation" value="5 N-Linked glycans (1 site)"/>
</dbReference>
<dbReference type="GlyCosmos" id="Q8K2C7">
    <property type="glycosylation" value="1 site, 5 glycans"/>
</dbReference>
<dbReference type="GlyGen" id="Q8K2C7">
    <property type="glycosylation" value="1 site, 6 N-linked glycans (1 site)"/>
</dbReference>
<dbReference type="iPTMnet" id="Q8K2C7"/>
<dbReference type="PhosphoSitePlus" id="Q8K2C7"/>
<dbReference type="SwissPalm" id="Q8K2C7"/>
<dbReference type="jPOST" id="Q8K2C7"/>
<dbReference type="PaxDb" id="10090-ENSMUSP00000128914"/>
<dbReference type="PeptideAtlas" id="Q8K2C7"/>
<dbReference type="ProteomicsDB" id="294110">
    <molecule id="Q8K2C7-1"/>
</dbReference>
<dbReference type="ProteomicsDB" id="294111">
    <molecule id="Q8K2C7-2"/>
</dbReference>
<dbReference type="Pumba" id="Q8K2C7"/>
<dbReference type="Antibodypedia" id="2459">
    <property type="antibodies" value="286 antibodies from 30 providers"/>
</dbReference>
<dbReference type="DNASU" id="216440"/>
<dbReference type="Ensembl" id="ENSMUST00000080975.6">
    <molecule id="Q8K2C7-2"/>
    <property type="protein sequence ID" value="ENSMUSP00000079770.5"/>
    <property type="gene ID" value="ENSMUSG00000040462.14"/>
</dbReference>
<dbReference type="Ensembl" id="ENSMUST00000164259.9">
    <molecule id="Q8K2C7-1"/>
    <property type="protein sequence ID" value="ENSMUSP00000128914.2"/>
    <property type="gene ID" value="ENSMUSG00000040462.14"/>
</dbReference>
<dbReference type="GeneID" id="216440"/>
<dbReference type="KEGG" id="mmu:216440"/>
<dbReference type="UCSC" id="uc007hhz.2">
    <molecule id="Q8K2C7-2"/>
    <property type="organism name" value="mouse"/>
</dbReference>
<dbReference type="UCSC" id="uc007hia.2">
    <molecule id="Q8K2C7-1"/>
    <property type="organism name" value="mouse"/>
</dbReference>
<dbReference type="AGR" id="MGI:1924301"/>
<dbReference type="CTD" id="10956"/>
<dbReference type="MGI" id="MGI:1924301">
    <property type="gene designation" value="Os9"/>
</dbReference>
<dbReference type="VEuPathDB" id="HostDB:ENSMUSG00000040462"/>
<dbReference type="eggNOG" id="KOG3394">
    <property type="taxonomic scope" value="Eukaryota"/>
</dbReference>
<dbReference type="GeneTree" id="ENSGT00530000063603"/>
<dbReference type="HOGENOM" id="CLU_026715_0_0_1"/>
<dbReference type="InParanoid" id="Q8K2C7"/>
<dbReference type="OMA" id="WLKRLYV"/>
<dbReference type="OrthoDB" id="448954at2759"/>
<dbReference type="PhylomeDB" id="Q8K2C7"/>
<dbReference type="TreeFam" id="TF314309"/>
<dbReference type="Reactome" id="R-MMU-382556">
    <property type="pathway name" value="ABC-family proteins mediated transport"/>
</dbReference>
<dbReference type="Reactome" id="R-MMU-5358346">
    <property type="pathway name" value="Hedgehog ligand biogenesis"/>
</dbReference>
<dbReference type="BioGRID-ORCS" id="216440">
    <property type="hits" value="0 hits in 77 CRISPR screens"/>
</dbReference>
<dbReference type="ChiTaRS" id="Os9">
    <property type="organism name" value="mouse"/>
</dbReference>
<dbReference type="PRO" id="PR:Q8K2C7"/>
<dbReference type="Proteomes" id="UP000000589">
    <property type="component" value="Chromosome 10"/>
</dbReference>
<dbReference type="RNAct" id="Q8K2C7">
    <property type="molecule type" value="protein"/>
</dbReference>
<dbReference type="Bgee" id="ENSMUSG00000040462">
    <property type="expression patterns" value="Expressed in lacrimal gland and 277 other cell types or tissues"/>
</dbReference>
<dbReference type="ExpressionAtlas" id="Q8K2C7">
    <property type="expression patterns" value="baseline and differential"/>
</dbReference>
<dbReference type="GO" id="GO:0005788">
    <property type="term" value="C:endoplasmic reticulum lumen"/>
    <property type="evidence" value="ECO:0000250"/>
    <property type="project" value="UniProtKB"/>
</dbReference>
<dbReference type="GO" id="GO:0000836">
    <property type="term" value="C:Hrd1p ubiquitin ligase complex"/>
    <property type="evidence" value="ECO:0007669"/>
    <property type="project" value="Ensembl"/>
</dbReference>
<dbReference type="GO" id="GO:0030246">
    <property type="term" value="F:carbohydrate binding"/>
    <property type="evidence" value="ECO:0007669"/>
    <property type="project" value="UniProtKB-KW"/>
</dbReference>
<dbReference type="GO" id="GO:0140032">
    <property type="term" value="F:glycosylation-dependent protein binding"/>
    <property type="evidence" value="ECO:0007669"/>
    <property type="project" value="Ensembl"/>
</dbReference>
<dbReference type="GO" id="GO:0002020">
    <property type="term" value="F:protease binding"/>
    <property type="evidence" value="ECO:0007669"/>
    <property type="project" value="Ensembl"/>
</dbReference>
<dbReference type="GO" id="GO:0030968">
    <property type="term" value="P:endoplasmic reticulum unfolded protein response"/>
    <property type="evidence" value="ECO:0007669"/>
    <property type="project" value="InterPro"/>
</dbReference>
<dbReference type="GO" id="GO:0036503">
    <property type="term" value="P:ERAD pathway"/>
    <property type="evidence" value="ECO:0000250"/>
    <property type="project" value="UniProtKB"/>
</dbReference>
<dbReference type="GO" id="GO:1904153">
    <property type="term" value="P:negative regulation of retrograde protein transport, ER to cytosol"/>
    <property type="evidence" value="ECO:0007669"/>
    <property type="project" value="Ensembl"/>
</dbReference>
<dbReference type="GO" id="GO:0006621">
    <property type="term" value="P:protein retention in ER lumen"/>
    <property type="evidence" value="ECO:0000250"/>
    <property type="project" value="UniProtKB"/>
</dbReference>
<dbReference type="GO" id="GO:0006605">
    <property type="term" value="P:protein targeting"/>
    <property type="evidence" value="ECO:0007669"/>
    <property type="project" value="Ensembl"/>
</dbReference>
<dbReference type="GO" id="GO:0016567">
    <property type="term" value="P:protein ubiquitination"/>
    <property type="evidence" value="ECO:0000250"/>
    <property type="project" value="UniProtKB"/>
</dbReference>
<dbReference type="GO" id="GO:0034976">
    <property type="term" value="P:response to endoplasmic reticulum stress"/>
    <property type="evidence" value="ECO:0000250"/>
    <property type="project" value="UniProtKB"/>
</dbReference>
<dbReference type="GO" id="GO:0006511">
    <property type="term" value="P:ubiquitin-dependent protein catabolic process"/>
    <property type="evidence" value="ECO:0000250"/>
    <property type="project" value="UniProtKB"/>
</dbReference>
<dbReference type="FunFam" id="2.70.130.10:FF:000002">
    <property type="entry name" value="protein OS-9 isoform X1"/>
    <property type="match status" value="1"/>
</dbReference>
<dbReference type="Gene3D" id="2.70.130.10">
    <property type="entry name" value="Mannose-6-phosphate receptor binding domain"/>
    <property type="match status" value="1"/>
</dbReference>
<dbReference type="InterPro" id="IPR009011">
    <property type="entry name" value="Man6P_isomerase_rcpt-bd_dom_sf"/>
</dbReference>
<dbReference type="InterPro" id="IPR044865">
    <property type="entry name" value="MRH_dom"/>
</dbReference>
<dbReference type="InterPro" id="IPR045149">
    <property type="entry name" value="OS-9-like"/>
</dbReference>
<dbReference type="InterPro" id="IPR012913">
    <property type="entry name" value="OS9-like_dom"/>
</dbReference>
<dbReference type="PANTHER" id="PTHR15414">
    <property type="entry name" value="OS-9-RELATED"/>
    <property type="match status" value="1"/>
</dbReference>
<dbReference type="PANTHER" id="PTHR15414:SF5">
    <property type="entry name" value="PROTEIN OS-9"/>
    <property type="match status" value="1"/>
</dbReference>
<dbReference type="Pfam" id="PF07915">
    <property type="entry name" value="PRKCSH"/>
    <property type="match status" value="1"/>
</dbReference>
<dbReference type="SUPFAM" id="SSF50911">
    <property type="entry name" value="Mannose 6-phosphate receptor domain"/>
    <property type="match status" value="1"/>
</dbReference>
<dbReference type="PROSITE" id="PS51914">
    <property type="entry name" value="MRH"/>
    <property type="match status" value="1"/>
</dbReference>
<comment type="function">
    <text evidence="1">Lectin component of the HRD1 complex, which functions in endoplasmic reticulum (ER) quality control and ER-associated degradation (ERAD). Specifically recognizes and binds improperly folded glycoproteins as well as hyperglycosylated proteins, retain them in the ER, and transfers them to the ubiquitination machinery and promote their degradation. Possible targets include TRPV4 as well as hyperglycosylated HSP90B1.</text>
</comment>
<comment type="subunit">
    <text evidence="1 5">Component of the HRD1 complex, which comprises at least SYNV1/HRD1, DERL1/2, FAM8A1, HERPUD1/HERP, OS9, SEL1L and UBE2J1 (By similarity). FAM8A1 is stabilized by interaction with SYNV1, which prevents its proteasomal degradation (By similarity). OS9 and UBE2J1 recruitment to the complex may be mediated by SEL1L. Through this complex, may interact with ERLEC1 and HSPA5 (By similarity). Interacts (via C-terminus) with CPNE6 (via second C2 domain); this interaction occurs in a calcium-dependent manner in vitro (PubMed:10403379). Interacts with CREB3 (By similarity).</text>
</comment>
<comment type="subcellular location">
    <subcellularLocation>
        <location evidence="1">Endoplasmic reticulum lumen</location>
    </subcellularLocation>
</comment>
<comment type="alternative products">
    <event type="alternative splicing"/>
    <isoform>
        <id>Q8K2C7-1</id>
        <name>1</name>
        <sequence type="displayed"/>
    </isoform>
    <isoform>
        <id>Q8K2C7-2</id>
        <name>2</name>
        <sequence type="described" ref="VSP_038220"/>
    </isoform>
</comment>
<comment type="PTM">
    <text evidence="6">N-glycosylated.</text>
</comment>
<comment type="PTM">
    <text evidence="1">Intramolecular disulfide bonds.</text>
</comment>
<comment type="similarity">
    <text evidence="8">Belongs to the OS-9 family.</text>
</comment>
<sequence>MAAEVLLSSLLGLLFLGLLLPARLTGGVGSLNLEELSEMRYGIQILPLPVMGGQSQASDVVVVSSKYKQRYECRLPAGAIHFQREREEETPAYQGPGIPELLSPMRDAPCLLKTKDWWTYEFCYGRHIQQYHMEDSEIKGDVLYLGHYQSSFNWDDETAKASKQHRLKRYHSQTYGNGSKCDLNGKPREAEVRFLCDEGAGISGDYIDRVDEPVSCSYVLTIRTSRLCPHPLLRPPASAAPQAILCHPALQPDEYMAYLQRQAESKQHEEKTTEEVQDTDRQVWSGSKAAGAPPKKEDVSPAKEEKESELWKLQGPEEQAAAREEAQAGEQDLNHEAAADPAPSPPNDFQNNVQVKLIRSPADLIRLIEELKAAEKGKPSVRREQPGDDTTEAPQREAEGTKAKGKDGEPPGLMEEEDGDDEEEEEEEEEDEEEQQLLGEFEKELEGMLLPSNRERLRSEVKAGMERELENIIQETEKELDPEGLRKESEREQAILALTSTLDKLIKRLQENQSPELVQKYKKRRVVPQKPPPSPHPTEEEPEHRVRVRVTKLRPGGPNRDLTVLEMNRENPQLKQIEGLVTEVLEREGLTAEGKIEIKIVRPGAEGKEEDTRWLTDEDTRNLKEIFFNILVQGAEEANKERQRQSELESNYRRVWGSPGGEDTGDLDEFDF</sequence>
<name>OS9_MOUSE</name>
<gene>
    <name type="primary">Os9</name>
</gene>
<keyword id="KW-0025">Alternative splicing</keyword>
<keyword id="KW-1015">Disulfide bond</keyword>
<keyword id="KW-0256">Endoplasmic reticulum</keyword>
<keyword id="KW-0325">Glycoprotein</keyword>
<keyword id="KW-0430">Lectin</keyword>
<keyword id="KW-1185">Reference proteome</keyword>
<keyword id="KW-0732">Signal</keyword>
<feature type="signal peptide" evidence="2">
    <location>
        <begin position="1"/>
        <end position="26"/>
    </location>
</feature>
<feature type="chain" id="PRO_0000386449" description="Protein OS-9">
    <location>
        <begin position="27"/>
        <end position="672"/>
    </location>
</feature>
<feature type="domain" description="MRH" evidence="3">
    <location>
        <begin position="108"/>
        <end position="230"/>
    </location>
</feature>
<feature type="region of interest" description="Disordered" evidence="4">
    <location>
        <begin position="261"/>
        <end position="355"/>
    </location>
</feature>
<feature type="region of interest" description="Disordered" evidence="4">
    <location>
        <begin position="372"/>
        <end position="452"/>
    </location>
</feature>
<feature type="region of interest" description="Disordered" evidence="4">
    <location>
        <begin position="511"/>
        <end position="548"/>
    </location>
</feature>
<feature type="region of interest" description="Disordered" evidence="4">
    <location>
        <begin position="637"/>
        <end position="672"/>
    </location>
</feature>
<feature type="compositionally biased region" description="Basic and acidic residues" evidence="4">
    <location>
        <begin position="263"/>
        <end position="281"/>
    </location>
</feature>
<feature type="compositionally biased region" description="Basic and acidic residues" evidence="4">
    <location>
        <begin position="294"/>
        <end position="310"/>
    </location>
</feature>
<feature type="compositionally biased region" description="Basic and acidic residues" evidence="4">
    <location>
        <begin position="320"/>
        <end position="338"/>
    </location>
</feature>
<feature type="compositionally biased region" description="Basic and acidic residues" evidence="4">
    <location>
        <begin position="372"/>
        <end position="386"/>
    </location>
</feature>
<feature type="compositionally biased region" description="Basic and acidic residues" evidence="4">
    <location>
        <begin position="394"/>
        <end position="409"/>
    </location>
</feature>
<feature type="compositionally biased region" description="Acidic residues" evidence="4">
    <location>
        <begin position="414"/>
        <end position="435"/>
    </location>
</feature>
<feature type="compositionally biased region" description="Basic and acidic residues" evidence="4">
    <location>
        <begin position="637"/>
        <end position="652"/>
    </location>
</feature>
<feature type="compositionally biased region" description="Acidic residues" evidence="4">
    <location>
        <begin position="663"/>
        <end position="672"/>
    </location>
</feature>
<feature type="binding site" evidence="1">
    <location>
        <position position="117"/>
    </location>
    <ligand>
        <name>a mannooligosaccharide derivative</name>
        <dbReference type="ChEBI" id="CHEBI:71274"/>
    </ligand>
</feature>
<feature type="binding site" evidence="1">
    <location>
        <position position="118"/>
    </location>
    <ligand>
        <name>a mannooligosaccharide derivative</name>
        <dbReference type="ChEBI" id="CHEBI:71274"/>
    </ligand>
</feature>
<feature type="binding site" evidence="1">
    <location>
        <position position="130"/>
    </location>
    <ligand>
        <name>a mannooligosaccharide derivative</name>
        <dbReference type="ChEBI" id="CHEBI:71274"/>
    </ligand>
</feature>
<feature type="binding site" evidence="1">
    <location>
        <position position="182"/>
    </location>
    <ligand>
        <name>a mannooligosaccharide derivative</name>
        <dbReference type="ChEBI" id="CHEBI:71274"/>
    </ligand>
</feature>
<feature type="binding site" evidence="1">
    <location>
        <position position="188"/>
    </location>
    <ligand>
        <name>a mannooligosaccharide derivative</name>
        <dbReference type="ChEBI" id="CHEBI:71274"/>
    </ligand>
</feature>
<feature type="binding site" evidence="1">
    <location>
        <position position="212"/>
    </location>
    <ligand>
        <name>a mannooligosaccharide derivative</name>
        <dbReference type="ChEBI" id="CHEBI:71274"/>
    </ligand>
</feature>
<feature type="binding site" evidence="1">
    <location>
        <position position="218"/>
    </location>
    <ligand>
        <name>a mannooligosaccharide derivative</name>
        <dbReference type="ChEBI" id="CHEBI:71274"/>
    </ligand>
</feature>
<feature type="glycosylation site" description="N-linked (GlcNAc...) asparagine" evidence="2">
    <location>
        <position position="177"/>
    </location>
</feature>
<feature type="disulfide bond" evidence="3">
    <location>
        <begin position="110"/>
        <end position="123"/>
    </location>
</feature>
<feature type="disulfide bond" evidence="3">
    <location>
        <begin position="181"/>
        <end position="216"/>
    </location>
</feature>
<feature type="disulfide bond" evidence="3">
    <location>
        <begin position="196"/>
        <end position="228"/>
    </location>
</feature>
<feature type="splice variant" id="VSP_038220" description="In isoform 2." evidence="7">
    <location>
        <begin position="539"/>
        <end position="593"/>
    </location>
</feature>
<feature type="sequence conflict" description="In Ref. 2; AAH31768." evidence="8" ref="2">
    <original>D</original>
    <variation>G</variation>
    <location>
        <position position="407"/>
    </location>
</feature>
<feature type="sequence conflict" description="In Ref. 2; AAH31768." evidence="8" ref="2">
    <original>N</original>
    <variation>D</variation>
    <location>
        <position position="453"/>
    </location>
</feature>
<organism>
    <name type="scientific">Mus musculus</name>
    <name type="common">Mouse</name>
    <dbReference type="NCBI Taxonomy" id="10090"/>
    <lineage>
        <taxon>Eukaryota</taxon>
        <taxon>Metazoa</taxon>
        <taxon>Chordata</taxon>
        <taxon>Craniata</taxon>
        <taxon>Vertebrata</taxon>
        <taxon>Euteleostomi</taxon>
        <taxon>Mammalia</taxon>
        <taxon>Eutheria</taxon>
        <taxon>Euarchontoglires</taxon>
        <taxon>Glires</taxon>
        <taxon>Rodentia</taxon>
        <taxon>Myomorpha</taxon>
        <taxon>Muroidea</taxon>
        <taxon>Muridae</taxon>
        <taxon>Murinae</taxon>
        <taxon>Mus</taxon>
        <taxon>Mus</taxon>
    </lineage>
</organism>
<accession>Q8K2C7</accession>
<evidence type="ECO:0000250" key="1">
    <source>
        <dbReference type="UniProtKB" id="Q13438"/>
    </source>
</evidence>
<evidence type="ECO:0000255" key="2"/>
<evidence type="ECO:0000255" key="3">
    <source>
        <dbReference type="PROSITE-ProRule" id="PRU01262"/>
    </source>
</evidence>
<evidence type="ECO:0000256" key="4">
    <source>
        <dbReference type="SAM" id="MobiDB-lite"/>
    </source>
</evidence>
<evidence type="ECO:0000269" key="5">
    <source>
    </source>
</evidence>
<evidence type="ECO:0000269" key="6">
    <source>
    </source>
</evidence>
<evidence type="ECO:0000303" key="7">
    <source>
    </source>
</evidence>
<evidence type="ECO:0000305" key="8"/>
<protein>
    <recommendedName>
        <fullName>Protein OS-9</fullName>
    </recommendedName>
</protein>
<proteinExistence type="evidence at protein level"/>
<reference key="1">
    <citation type="journal article" date="2009" name="PLoS Biol.">
        <title>Lineage-specific biology revealed by a finished genome assembly of the mouse.</title>
        <authorList>
            <person name="Church D.M."/>
            <person name="Goodstadt L."/>
            <person name="Hillier L.W."/>
            <person name="Zody M.C."/>
            <person name="Goldstein S."/>
            <person name="She X."/>
            <person name="Bult C.J."/>
            <person name="Agarwala R."/>
            <person name="Cherry J.L."/>
            <person name="DiCuccio M."/>
            <person name="Hlavina W."/>
            <person name="Kapustin Y."/>
            <person name="Meric P."/>
            <person name="Maglott D."/>
            <person name="Birtle Z."/>
            <person name="Marques A.C."/>
            <person name="Graves T."/>
            <person name="Zhou S."/>
            <person name="Teague B."/>
            <person name="Potamousis K."/>
            <person name="Churas C."/>
            <person name="Place M."/>
            <person name="Herschleb J."/>
            <person name="Runnheim R."/>
            <person name="Forrest D."/>
            <person name="Amos-Landgraf J."/>
            <person name="Schwartz D.C."/>
            <person name="Cheng Z."/>
            <person name="Lindblad-Toh K."/>
            <person name="Eichler E.E."/>
            <person name="Ponting C.P."/>
        </authorList>
    </citation>
    <scope>NUCLEOTIDE SEQUENCE [LARGE SCALE GENOMIC DNA]</scope>
    <source>
        <strain>C57BL/6J</strain>
    </source>
</reference>
<reference key="2">
    <citation type="journal article" date="2004" name="Genome Res.">
        <title>The status, quality, and expansion of the NIH full-length cDNA project: the Mammalian Gene Collection (MGC).</title>
        <authorList>
            <consortium name="The MGC Project Team"/>
        </authorList>
    </citation>
    <scope>NUCLEOTIDE SEQUENCE [LARGE SCALE MRNA] (ISOFORM 2)</scope>
    <source>
        <strain>FVB/N</strain>
        <tissue>Mammary tumor</tissue>
    </source>
</reference>
<reference key="3">
    <citation type="journal article" date="1999" name="FEBS Lett.">
        <title>Ca2(+)-dependent interaction of N-copine, a member of the two C2 domain protein family, with OS-9, the product of a gene frequently amplified in osteosarcoma.</title>
        <authorList>
            <person name="Nakayama T."/>
            <person name="Yaoi T."/>
            <person name="Kuwajima G."/>
            <person name="Yoshie O."/>
            <person name="Sakata T."/>
        </authorList>
    </citation>
    <scope>INTERACTION WITH CPNE6</scope>
</reference>
<reference key="4">
    <citation type="journal article" date="2009" name="J. Mol. Biol.">
        <title>Mammalian OS-9 is upregulated in response to endoplasmic reticulum stress and facilitates ubiquitination of misfolded glycoproteins.</title>
        <authorList>
            <person name="Alcock F."/>
            <person name="Swanton E."/>
        </authorList>
    </citation>
    <scope>GLYCOSYLATION</scope>
</reference>
<reference key="5">
    <citation type="journal article" date="2010" name="Cell">
        <title>A tissue-specific atlas of mouse protein phosphorylation and expression.</title>
        <authorList>
            <person name="Huttlin E.L."/>
            <person name="Jedrychowski M.P."/>
            <person name="Elias J.E."/>
            <person name="Goswami T."/>
            <person name="Rad R."/>
            <person name="Beausoleil S.A."/>
            <person name="Villen J."/>
            <person name="Haas W."/>
            <person name="Sowa M.E."/>
            <person name="Gygi S.P."/>
        </authorList>
    </citation>
    <scope>IDENTIFICATION BY MASS SPECTROMETRY [LARGE SCALE ANALYSIS]</scope>
    <source>
        <tissue>Liver</tissue>
        <tissue>Lung</tissue>
        <tissue>Pancreas</tissue>
        <tissue>Spleen</tissue>
        <tissue>Testis</tissue>
    </source>
</reference>